<name>Y2152_CLOPE</name>
<evidence type="ECO:0000255" key="1">
    <source>
        <dbReference type="HAMAP-Rule" id="MF_00652"/>
    </source>
</evidence>
<organism>
    <name type="scientific">Clostridium perfringens (strain 13 / Type A)</name>
    <dbReference type="NCBI Taxonomy" id="195102"/>
    <lineage>
        <taxon>Bacteria</taxon>
        <taxon>Bacillati</taxon>
        <taxon>Bacillota</taxon>
        <taxon>Clostridia</taxon>
        <taxon>Eubacteriales</taxon>
        <taxon>Clostridiaceae</taxon>
        <taxon>Clostridium</taxon>
    </lineage>
</organism>
<proteinExistence type="inferred from homology"/>
<reference key="1">
    <citation type="journal article" date="2002" name="Proc. Natl. Acad. Sci. U.S.A.">
        <title>Complete genome sequence of Clostridium perfringens, an anaerobic flesh-eater.</title>
        <authorList>
            <person name="Shimizu T."/>
            <person name="Ohtani K."/>
            <person name="Hirakawa H."/>
            <person name="Ohshima K."/>
            <person name="Yamashita A."/>
            <person name="Shiba T."/>
            <person name="Ogasawara N."/>
            <person name="Hattori M."/>
            <person name="Kuhara S."/>
            <person name="Hayashi H."/>
        </authorList>
    </citation>
    <scope>NUCLEOTIDE SEQUENCE [LARGE SCALE GENOMIC DNA]</scope>
    <source>
        <strain>13 / Type A</strain>
    </source>
</reference>
<protein>
    <recommendedName>
        <fullName evidence="1">UPF0246 protein CPE2152</fullName>
    </recommendedName>
</protein>
<keyword id="KW-1185">Reference proteome</keyword>
<sequence length="254" mass="29331">MIALLSPAKTLDLTKPNLNIETSKPIFISEAEVIMNNLKELEIQDLCPLMKISEDLGVQTFTKIQDWNTIYYGDEKPFVLSFKGEAYRGLDADDFTKEDLEFCNDSLRILSGLYGALKPLDGTKAYRLEMGTKISIDGSKNLYDFWGNKIMEAVLKDLENHKEKVIINLASNEYYKSIKKIDKKVRVITPVFKERKGIEYKVVTVYAKKARGQMVRYITKNRITKSEDIKNFDLDGYEFNERLSEGDTWVFTRD</sequence>
<dbReference type="EMBL" id="BA000016">
    <property type="protein sequence ID" value="BAB81858.1"/>
    <property type="molecule type" value="Genomic_DNA"/>
</dbReference>
<dbReference type="RefSeq" id="WP_011010791.1">
    <property type="nucleotide sequence ID" value="NC_003366.1"/>
</dbReference>
<dbReference type="SMR" id="Q8XIG8"/>
<dbReference type="STRING" id="195102.gene:10491422"/>
<dbReference type="KEGG" id="cpe:CPE2152"/>
<dbReference type="HOGENOM" id="CLU_061989_0_0_9"/>
<dbReference type="Proteomes" id="UP000000818">
    <property type="component" value="Chromosome"/>
</dbReference>
<dbReference type="GO" id="GO:0005829">
    <property type="term" value="C:cytosol"/>
    <property type="evidence" value="ECO:0007669"/>
    <property type="project" value="TreeGrafter"/>
</dbReference>
<dbReference type="GO" id="GO:0033194">
    <property type="term" value="P:response to hydroperoxide"/>
    <property type="evidence" value="ECO:0007669"/>
    <property type="project" value="TreeGrafter"/>
</dbReference>
<dbReference type="HAMAP" id="MF_00652">
    <property type="entry name" value="UPF0246"/>
    <property type="match status" value="1"/>
</dbReference>
<dbReference type="InterPro" id="IPR005583">
    <property type="entry name" value="YaaA"/>
</dbReference>
<dbReference type="NCBIfam" id="NF002542">
    <property type="entry name" value="PRK02101.1-3"/>
    <property type="match status" value="1"/>
</dbReference>
<dbReference type="PANTHER" id="PTHR30283:SF4">
    <property type="entry name" value="PEROXIDE STRESS RESISTANCE PROTEIN YAAA"/>
    <property type="match status" value="1"/>
</dbReference>
<dbReference type="PANTHER" id="PTHR30283">
    <property type="entry name" value="PEROXIDE STRESS RESPONSE PROTEIN YAAA"/>
    <property type="match status" value="1"/>
</dbReference>
<dbReference type="Pfam" id="PF03883">
    <property type="entry name" value="H2O2_YaaD"/>
    <property type="match status" value="1"/>
</dbReference>
<comment type="similarity">
    <text evidence="1">Belongs to the UPF0246 family.</text>
</comment>
<accession>Q8XIG8</accession>
<feature type="chain" id="PRO_0000203980" description="UPF0246 protein CPE2152">
    <location>
        <begin position="1"/>
        <end position="254"/>
    </location>
</feature>
<gene>
    <name type="ordered locus">CPE2152</name>
</gene>